<gene>
    <name evidence="1" type="primary">leuS</name>
    <name type="ordered locus">AZC_0567</name>
</gene>
<name>SYL_AZOC5</name>
<reference key="1">
    <citation type="submission" date="2007-04" db="EMBL/GenBank/DDBJ databases">
        <title>Complete genome sequence of the nitrogen-fixing bacterium Azorhizobium caulinodans ORS571.</title>
        <authorList>
            <person name="Lee K.B."/>
            <person name="Backer P.D."/>
            <person name="Aono T."/>
            <person name="Liu C.T."/>
            <person name="Suzuki S."/>
            <person name="Suzuki T."/>
            <person name="Kaneko T."/>
            <person name="Yamada M."/>
            <person name="Tabata S."/>
            <person name="Kupfer D.M."/>
            <person name="Najar F.Z."/>
            <person name="Wiley G.B."/>
            <person name="Roe B."/>
            <person name="Binnewies T."/>
            <person name="Ussery D."/>
            <person name="Vereecke D."/>
            <person name="Gevers D."/>
            <person name="Holsters M."/>
            <person name="Oyaizu H."/>
        </authorList>
    </citation>
    <scope>NUCLEOTIDE SEQUENCE [LARGE SCALE GENOMIC DNA]</scope>
    <source>
        <strain>ATCC 43989 / DSM 5975 / JCM 20966 / LMG 6465 / NBRC 14845 / NCIMB 13405 / ORS 571</strain>
    </source>
</reference>
<organism>
    <name type="scientific">Azorhizobium caulinodans (strain ATCC 43989 / DSM 5975 / JCM 20966 / LMG 6465 / NBRC 14845 / NCIMB 13405 / ORS 571)</name>
    <dbReference type="NCBI Taxonomy" id="438753"/>
    <lineage>
        <taxon>Bacteria</taxon>
        <taxon>Pseudomonadati</taxon>
        <taxon>Pseudomonadota</taxon>
        <taxon>Alphaproteobacteria</taxon>
        <taxon>Hyphomicrobiales</taxon>
        <taxon>Xanthobacteraceae</taxon>
        <taxon>Azorhizobium</taxon>
    </lineage>
</organism>
<proteinExistence type="inferred from homology"/>
<dbReference type="EC" id="6.1.1.4" evidence="1"/>
<dbReference type="EMBL" id="AP009384">
    <property type="protein sequence ID" value="BAF86565.1"/>
    <property type="molecule type" value="Genomic_DNA"/>
</dbReference>
<dbReference type="RefSeq" id="WP_012169098.1">
    <property type="nucleotide sequence ID" value="NC_009937.1"/>
</dbReference>
<dbReference type="SMR" id="A8IMK0"/>
<dbReference type="STRING" id="438753.AZC_0567"/>
<dbReference type="KEGG" id="azc:AZC_0567"/>
<dbReference type="eggNOG" id="COG0495">
    <property type="taxonomic scope" value="Bacteria"/>
</dbReference>
<dbReference type="HOGENOM" id="CLU_004427_0_0_5"/>
<dbReference type="Proteomes" id="UP000000270">
    <property type="component" value="Chromosome"/>
</dbReference>
<dbReference type="GO" id="GO:0005829">
    <property type="term" value="C:cytosol"/>
    <property type="evidence" value="ECO:0007669"/>
    <property type="project" value="TreeGrafter"/>
</dbReference>
<dbReference type="GO" id="GO:0002161">
    <property type="term" value="F:aminoacyl-tRNA deacylase activity"/>
    <property type="evidence" value="ECO:0007669"/>
    <property type="project" value="InterPro"/>
</dbReference>
<dbReference type="GO" id="GO:0005524">
    <property type="term" value="F:ATP binding"/>
    <property type="evidence" value="ECO:0007669"/>
    <property type="project" value="UniProtKB-UniRule"/>
</dbReference>
<dbReference type="GO" id="GO:0004823">
    <property type="term" value="F:leucine-tRNA ligase activity"/>
    <property type="evidence" value="ECO:0007669"/>
    <property type="project" value="UniProtKB-UniRule"/>
</dbReference>
<dbReference type="GO" id="GO:0006429">
    <property type="term" value="P:leucyl-tRNA aminoacylation"/>
    <property type="evidence" value="ECO:0007669"/>
    <property type="project" value="UniProtKB-UniRule"/>
</dbReference>
<dbReference type="CDD" id="cd07958">
    <property type="entry name" value="Anticodon_Ia_Leu_BEm"/>
    <property type="match status" value="1"/>
</dbReference>
<dbReference type="CDD" id="cd00812">
    <property type="entry name" value="LeuRS_core"/>
    <property type="match status" value="1"/>
</dbReference>
<dbReference type="FunFam" id="1.10.730.10:FF:000002">
    <property type="entry name" value="Leucine--tRNA ligase"/>
    <property type="match status" value="1"/>
</dbReference>
<dbReference type="FunFam" id="3.40.50.620:FF:000003">
    <property type="entry name" value="Leucine--tRNA ligase"/>
    <property type="match status" value="1"/>
</dbReference>
<dbReference type="Gene3D" id="2.20.28.290">
    <property type="match status" value="1"/>
</dbReference>
<dbReference type="Gene3D" id="3.10.20.590">
    <property type="match status" value="1"/>
</dbReference>
<dbReference type="Gene3D" id="3.40.50.620">
    <property type="entry name" value="HUPs"/>
    <property type="match status" value="2"/>
</dbReference>
<dbReference type="Gene3D" id="1.10.730.10">
    <property type="entry name" value="Isoleucyl-tRNA Synthetase, Domain 1"/>
    <property type="match status" value="1"/>
</dbReference>
<dbReference type="HAMAP" id="MF_00049_B">
    <property type="entry name" value="Leu_tRNA_synth_B"/>
    <property type="match status" value="1"/>
</dbReference>
<dbReference type="InterPro" id="IPR001412">
    <property type="entry name" value="aa-tRNA-synth_I_CS"/>
</dbReference>
<dbReference type="InterPro" id="IPR002300">
    <property type="entry name" value="aa-tRNA-synth_Ia"/>
</dbReference>
<dbReference type="InterPro" id="IPR002302">
    <property type="entry name" value="Leu-tRNA-ligase"/>
</dbReference>
<dbReference type="InterPro" id="IPR025709">
    <property type="entry name" value="Leu_tRNA-synth_edit"/>
</dbReference>
<dbReference type="InterPro" id="IPR013155">
    <property type="entry name" value="M/V/L/I-tRNA-synth_anticd-bd"/>
</dbReference>
<dbReference type="InterPro" id="IPR015413">
    <property type="entry name" value="Methionyl/Leucyl_tRNA_Synth"/>
</dbReference>
<dbReference type="InterPro" id="IPR014729">
    <property type="entry name" value="Rossmann-like_a/b/a_fold"/>
</dbReference>
<dbReference type="InterPro" id="IPR009080">
    <property type="entry name" value="tRNAsynth_Ia_anticodon-bd"/>
</dbReference>
<dbReference type="InterPro" id="IPR009008">
    <property type="entry name" value="Val/Leu/Ile-tRNA-synth_edit"/>
</dbReference>
<dbReference type="NCBIfam" id="TIGR00396">
    <property type="entry name" value="leuS_bact"/>
    <property type="match status" value="1"/>
</dbReference>
<dbReference type="PANTHER" id="PTHR43740:SF2">
    <property type="entry name" value="LEUCINE--TRNA LIGASE, MITOCHONDRIAL"/>
    <property type="match status" value="1"/>
</dbReference>
<dbReference type="PANTHER" id="PTHR43740">
    <property type="entry name" value="LEUCYL-TRNA SYNTHETASE"/>
    <property type="match status" value="1"/>
</dbReference>
<dbReference type="Pfam" id="PF08264">
    <property type="entry name" value="Anticodon_1"/>
    <property type="match status" value="1"/>
</dbReference>
<dbReference type="Pfam" id="PF00133">
    <property type="entry name" value="tRNA-synt_1"/>
    <property type="match status" value="2"/>
</dbReference>
<dbReference type="Pfam" id="PF13603">
    <property type="entry name" value="tRNA-synt_1_2"/>
    <property type="match status" value="1"/>
</dbReference>
<dbReference type="Pfam" id="PF09334">
    <property type="entry name" value="tRNA-synt_1g"/>
    <property type="match status" value="1"/>
</dbReference>
<dbReference type="PRINTS" id="PR00985">
    <property type="entry name" value="TRNASYNTHLEU"/>
</dbReference>
<dbReference type="SUPFAM" id="SSF47323">
    <property type="entry name" value="Anticodon-binding domain of a subclass of class I aminoacyl-tRNA synthetases"/>
    <property type="match status" value="1"/>
</dbReference>
<dbReference type="SUPFAM" id="SSF52374">
    <property type="entry name" value="Nucleotidylyl transferase"/>
    <property type="match status" value="1"/>
</dbReference>
<dbReference type="SUPFAM" id="SSF50677">
    <property type="entry name" value="ValRS/IleRS/LeuRS editing domain"/>
    <property type="match status" value="1"/>
</dbReference>
<dbReference type="PROSITE" id="PS00178">
    <property type="entry name" value="AA_TRNA_LIGASE_I"/>
    <property type="match status" value="1"/>
</dbReference>
<evidence type="ECO:0000255" key="1">
    <source>
        <dbReference type="HAMAP-Rule" id="MF_00049"/>
    </source>
</evidence>
<evidence type="ECO:0000256" key="2">
    <source>
        <dbReference type="SAM" id="MobiDB-lite"/>
    </source>
</evidence>
<sequence>MSTDRYNARDAEPRWQAIWNERGIFRTRNDDPRPKFFVMEMFPYPSGRIHIGHGRNYVMGDVLARYKRMQGFNVLHPMGWDSFGLPAENAAIERGIHPKSWTYENIASMKEQLQLLGLSLDWNREVATCDPSYYAEQQRLFLDLFENDLAYRKESEVNWDPVDNTVLANEQVIDGRGWRSGAVVERRKLNQWFFRITAFAQELLDAIDTLDRWPDKVRLMQRNWIGRSEGLEVLFELSKGSVAAAGTSAVKVYTTRPDTLFGASFLALSPDHPLTQHLAATRPDLAAFVADCKTGGTSAEAIETQEKKGFDTGLTVVHPLDAARTVPVYVANFVLMDYGTGAIFGCPAHDQRDLDFARKYGLTVTPVVLPPGADPAVFAVGSEAYDGEGTLYNSQFLDGLSIADAKEQVARRLERFRVGEQPQGTRKVNFRLRDWGISRQRYWGCPIPIIHCDSCGPVAVPREQLPVELPDDVTFDRPGNPLDRAKAWRDVPCPKCGAPARRETDTMDTFVDSSWYFLRYASDNPDKPLDKDAVRHWLPVDQYIGGIEHAILHLLYSRFFTRALKACGRVDVAEPFAGLFTQGMIVHETYKDKDGRWLFPEEVKLLGDGKAEKLDDGSPVTVGPPEKMSKSKKNVVPPEVVVDTYGVDAGRWFMLSDTPPERDSEWTQSGIEGAWRFVQRVWRQVQEAIELGAPKGADKPASFDAAATALRRAAHGLAHQVADDVERLRFNVAVAHVHEFANAFGQAIASARTASPVPADLAFALREAAEIVTRVVGPMVPHLAEECWAALGYDTLLAEAAWPKAEPELLVENTITLPIQINGKKRDDITVPRDATAAEVEAAVLEMESVRRALDGKAPKRIIVVPQRIVNVVA</sequence>
<feature type="chain" id="PRO_1000071108" description="Leucine--tRNA ligase">
    <location>
        <begin position="1"/>
        <end position="874"/>
    </location>
</feature>
<feature type="region of interest" description="Disordered" evidence="2">
    <location>
        <begin position="614"/>
        <end position="634"/>
    </location>
</feature>
<feature type="short sequence motif" description="'HIGH' region">
    <location>
        <begin position="43"/>
        <end position="53"/>
    </location>
</feature>
<feature type="short sequence motif" description="'KMSKS' region">
    <location>
        <begin position="627"/>
        <end position="631"/>
    </location>
</feature>
<feature type="binding site" evidence="1">
    <location>
        <position position="630"/>
    </location>
    <ligand>
        <name>ATP</name>
        <dbReference type="ChEBI" id="CHEBI:30616"/>
    </ligand>
</feature>
<comment type="catalytic activity">
    <reaction evidence="1">
        <text>tRNA(Leu) + L-leucine + ATP = L-leucyl-tRNA(Leu) + AMP + diphosphate</text>
        <dbReference type="Rhea" id="RHEA:11688"/>
        <dbReference type="Rhea" id="RHEA-COMP:9613"/>
        <dbReference type="Rhea" id="RHEA-COMP:9622"/>
        <dbReference type="ChEBI" id="CHEBI:30616"/>
        <dbReference type="ChEBI" id="CHEBI:33019"/>
        <dbReference type="ChEBI" id="CHEBI:57427"/>
        <dbReference type="ChEBI" id="CHEBI:78442"/>
        <dbReference type="ChEBI" id="CHEBI:78494"/>
        <dbReference type="ChEBI" id="CHEBI:456215"/>
        <dbReference type="EC" id="6.1.1.4"/>
    </reaction>
</comment>
<comment type="subcellular location">
    <subcellularLocation>
        <location evidence="1">Cytoplasm</location>
    </subcellularLocation>
</comment>
<comment type="similarity">
    <text evidence="1">Belongs to the class-I aminoacyl-tRNA synthetase family.</text>
</comment>
<accession>A8IMK0</accession>
<protein>
    <recommendedName>
        <fullName evidence="1">Leucine--tRNA ligase</fullName>
        <ecNumber evidence="1">6.1.1.4</ecNumber>
    </recommendedName>
    <alternativeName>
        <fullName evidence="1">Leucyl-tRNA synthetase</fullName>
        <shortName evidence="1">LeuRS</shortName>
    </alternativeName>
</protein>
<keyword id="KW-0030">Aminoacyl-tRNA synthetase</keyword>
<keyword id="KW-0067">ATP-binding</keyword>
<keyword id="KW-0963">Cytoplasm</keyword>
<keyword id="KW-0436">Ligase</keyword>
<keyword id="KW-0547">Nucleotide-binding</keyword>
<keyword id="KW-0648">Protein biosynthesis</keyword>
<keyword id="KW-1185">Reference proteome</keyword>